<reference key="1">
    <citation type="submission" date="2008-06" db="EMBL/GenBank/DDBJ databases">
        <title>Complete sequence of Stenotrophomonas maltophilia R551-3.</title>
        <authorList>
            <consortium name="US DOE Joint Genome Institute"/>
            <person name="Lucas S."/>
            <person name="Copeland A."/>
            <person name="Lapidus A."/>
            <person name="Glavina del Rio T."/>
            <person name="Dalin E."/>
            <person name="Tice H."/>
            <person name="Pitluck S."/>
            <person name="Chain P."/>
            <person name="Malfatti S."/>
            <person name="Shin M."/>
            <person name="Vergez L."/>
            <person name="Lang D."/>
            <person name="Schmutz J."/>
            <person name="Larimer F."/>
            <person name="Land M."/>
            <person name="Hauser L."/>
            <person name="Kyrpides N."/>
            <person name="Mikhailova N."/>
            <person name="Taghavi S."/>
            <person name="Monchy S."/>
            <person name="Newman L."/>
            <person name="Vangronsveld J."/>
            <person name="van der Lelie D."/>
            <person name="Richardson P."/>
        </authorList>
    </citation>
    <scope>NUCLEOTIDE SEQUENCE [LARGE SCALE GENOMIC DNA]</scope>
    <source>
        <strain>R551-3</strain>
    </source>
</reference>
<comment type="function">
    <text evidence="1">Specifically methylates the N7 position of guanine in position 527 of 16S rRNA.</text>
</comment>
<comment type="catalytic activity">
    <reaction evidence="1">
        <text>guanosine(527) in 16S rRNA + S-adenosyl-L-methionine = N(7)-methylguanosine(527) in 16S rRNA + S-adenosyl-L-homocysteine</text>
        <dbReference type="Rhea" id="RHEA:42732"/>
        <dbReference type="Rhea" id="RHEA-COMP:10209"/>
        <dbReference type="Rhea" id="RHEA-COMP:10210"/>
        <dbReference type="ChEBI" id="CHEBI:57856"/>
        <dbReference type="ChEBI" id="CHEBI:59789"/>
        <dbReference type="ChEBI" id="CHEBI:74269"/>
        <dbReference type="ChEBI" id="CHEBI:74480"/>
        <dbReference type="EC" id="2.1.1.170"/>
    </reaction>
</comment>
<comment type="subcellular location">
    <subcellularLocation>
        <location evidence="1">Cytoplasm</location>
    </subcellularLocation>
</comment>
<comment type="similarity">
    <text evidence="1">Belongs to the methyltransferase superfamily. RNA methyltransferase RsmG family.</text>
</comment>
<organism>
    <name type="scientific">Stenotrophomonas maltophilia (strain R551-3)</name>
    <dbReference type="NCBI Taxonomy" id="391008"/>
    <lineage>
        <taxon>Bacteria</taxon>
        <taxon>Pseudomonadati</taxon>
        <taxon>Pseudomonadota</taxon>
        <taxon>Gammaproteobacteria</taxon>
        <taxon>Lysobacterales</taxon>
        <taxon>Lysobacteraceae</taxon>
        <taxon>Stenotrophomonas</taxon>
        <taxon>Stenotrophomonas maltophilia group</taxon>
    </lineage>
</organism>
<keyword id="KW-0963">Cytoplasm</keyword>
<keyword id="KW-0489">Methyltransferase</keyword>
<keyword id="KW-0698">rRNA processing</keyword>
<keyword id="KW-0949">S-adenosyl-L-methionine</keyword>
<keyword id="KW-0808">Transferase</keyword>
<protein>
    <recommendedName>
        <fullName evidence="1">Ribosomal RNA small subunit methyltransferase G</fullName>
        <ecNumber evidence="1">2.1.1.170</ecNumber>
    </recommendedName>
    <alternativeName>
        <fullName evidence="1">16S rRNA 7-methylguanosine methyltransferase</fullName>
        <shortName evidence="1">16S rRNA m7G methyltransferase</shortName>
    </alternativeName>
</protein>
<accession>B4SNP6</accession>
<feature type="chain" id="PRO_1000092655" description="Ribosomal RNA small subunit methyltransferase G">
    <location>
        <begin position="1"/>
        <end position="212"/>
    </location>
</feature>
<feature type="binding site" evidence="1">
    <location>
        <position position="80"/>
    </location>
    <ligand>
        <name>S-adenosyl-L-methionine</name>
        <dbReference type="ChEBI" id="CHEBI:59789"/>
    </ligand>
</feature>
<feature type="binding site" evidence="1">
    <location>
        <position position="85"/>
    </location>
    <ligand>
        <name>S-adenosyl-L-methionine</name>
        <dbReference type="ChEBI" id="CHEBI:59789"/>
    </ligand>
</feature>
<feature type="binding site" evidence="1">
    <location>
        <begin position="131"/>
        <end position="132"/>
    </location>
    <ligand>
        <name>S-adenosyl-L-methionine</name>
        <dbReference type="ChEBI" id="CHEBI:59789"/>
    </ligand>
</feature>
<feature type="binding site" evidence="1">
    <location>
        <position position="146"/>
    </location>
    <ligand>
        <name>S-adenosyl-L-methionine</name>
        <dbReference type="ChEBI" id="CHEBI:59789"/>
    </ligand>
</feature>
<sequence>MSEHPLPASVAATLEQGLASMGLDAALAPPLLRYLALLHRWNGTYNLTAIRDPQEMVTRHLLDSLAMQPFVADGSLADLGTGPGLPGIPLAIACPGLQVTLVESNGKKARFMREAVRQLGLGNARVAESRAEALDEAGHYDQLTARAMDTLAGIVRVGGHLLRPGGVLLAMKGVYPHEEIAELPAGWQVREVTPLSVPGLAGERHLVTVTGP</sequence>
<gene>
    <name evidence="1" type="primary">rsmG</name>
    <name type="ordered locus">Smal_3967</name>
</gene>
<evidence type="ECO:0000255" key="1">
    <source>
        <dbReference type="HAMAP-Rule" id="MF_00074"/>
    </source>
</evidence>
<proteinExistence type="inferred from homology"/>
<name>RSMG_STRM5</name>
<dbReference type="EC" id="2.1.1.170" evidence="1"/>
<dbReference type="EMBL" id="CP001111">
    <property type="protein sequence ID" value="ACF53666.1"/>
    <property type="molecule type" value="Genomic_DNA"/>
</dbReference>
<dbReference type="RefSeq" id="WP_012512505.1">
    <property type="nucleotide sequence ID" value="NC_011071.1"/>
</dbReference>
<dbReference type="SMR" id="B4SNP6"/>
<dbReference type="STRING" id="391008.Smal_3967"/>
<dbReference type="KEGG" id="smt:Smal_3967"/>
<dbReference type="eggNOG" id="COG0357">
    <property type="taxonomic scope" value="Bacteria"/>
</dbReference>
<dbReference type="HOGENOM" id="CLU_065341_2_0_6"/>
<dbReference type="OrthoDB" id="9808773at2"/>
<dbReference type="Proteomes" id="UP000001867">
    <property type="component" value="Chromosome"/>
</dbReference>
<dbReference type="GO" id="GO:0005829">
    <property type="term" value="C:cytosol"/>
    <property type="evidence" value="ECO:0007669"/>
    <property type="project" value="TreeGrafter"/>
</dbReference>
<dbReference type="GO" id="GO:0070043">
    <property type="term" value="F:rRNA (guanine-N7-)-methyltransferase activity"/>
    <property type="evidence" value="ECO:0007669"/>
    <property type="project" value="UniProtKB-UniRule"/>
</dbReference>
<dbReference type="CDD" id="cd02440">
    <property type="entry name" value="AdoMet_MTases"/>
    <property type="match status" value="1"/>
</dbReference>
<dbReference type="Gene3D" id="3.40.50.150">
    <property type="entry name" value="Vaccinia Virus protein VP39"/>
    <property type="match status" value="1"/>
</dbReference>
<dbReference type="HAMAP" id="MF_00074">
    <property type="entry name" value="16SrRNA_methyltr_G"/>
    <property type="match status" value="1"/>
</dbReference>
<dbReference type="InterPro" id="IPR003682">
    <property type="entry name" value="rRNA_ssu_MeTfrase_G"/>
</dbReference>
<dbReference type="InterPro" id="IPR029063">
    <property type="entry name" value="SAM-dependent_MTases_sf"/>
</dbReference>
<dbReference type="NCBIfam" id="TIGR00138">
    <property type="entry name" value="rsmG_gidB"/>
    <property type="match status" value="1"/>
</dbReference>
<dbReference type="PANTHER" id="PTHR31760">
    <property type="entry name" value="S-ADENOSYL-L-METHIONINE-DEPENDENT METHYLTRANSFERASES SUPERFAMILY PROTEIN"/>
    <property type="match status" value="1"/>
</dbReference>
<dbReference type="PANTHER" id="PTHR31760:SF0">
    <property type="entry name" value="S-ADENOSYL-L-METHIONINE-DEPENDENT METHYLTRANSFERASES SUPERFAMILY PROTEIN"/>
    <property type="match status" value="1"/>
</dbReference>
<dbReference type="Pfam" id="PF02527">
    <property type="entry name" value="GidB"/>
    <property type="match status" value="1"/>
</dbReference>
<dbReference type="PIRSF" id="PIRSF003078">
    <property type="entry name" value="GidB"/>
    <property type="match status" value="1"/>
</dbReference>
<dbReference type="SUPFAM" id="SSF53335">
    <property type="entry name" value="S-adenosyl-L-methionine-dependent methyltransferases"/>
    <property type="match status" value="1"/>
</dbReference>